<dbReference type="EC" id="2.4.1.227" evidence="1"/>
<dbReference type="EMBL" id="AE017321">
    <property type="protein sequence ID" value="AAW71145.1"/>
    <property type="molecule type" value="Genomic_DNA"/>
</dbReference>
<dbReference type="RefSeq" id="WP_011256755.1">
    <property type="nucleotide sequence ID" value="NC_006833.1"/>
</dbReference>
<dbReference type="SMR" id="Q5GS79"/>
<dbReference type="STRING" id="292805.Wbm0557"/>
<dbReference type="CAZy" id="GT28">
    <property type="family name" value="Glycosyltransferase Family 28"/>
</dbReference>
<dbReference type="KEGG" id="wbm:Wbm0557"/>
<dbReference type="eggNOG" id="COG0707">
    <property type="taxonomic scope" value="Bacteria"/>
</dbReference>
<dbReference type="HOGENOM" id="CLU_037404_2_1_5"/>
<dbReference type="UniPathway" id="UPA00219"/>
<dbReference type="Proteomes" id="UP000000534">
    <property type="component" value="Chromosome"/>
</dbReference>
<dbReference type="GO" id="GO:0005886">
    <property type="term" value="C:plasma membrane"/>
    <property type="evidence" value="ECO:0007669"/>
    <property type="project" value="UniProtKB-SubCell"/>
</dbReference>
<dbReference type="GO" id="GO:0051991">
    <property type="term" value="F:UDP-N-acetyl-D-glucosamine:N-acetylmuramoyl-L-alanyl-D-glutamyl-meso-2,6-diaminopimelyl-D-alanyl-D-alanine-diphosphoundecaprenol 4-beta-N-acetylglucosaminlytransferase activity"/>
    <property type="evidence" value="ECO:0007669"/>
    <property type="project" value="RHEA"/>
</dbReference>
<dbReference type="GO" id="GO:0050511">
    <property type="term" value="F:undecaprenyldiphospho-muramoylpentapeptide beta-N-acetylglucosaminyltransferase activity"/>
    <property type="evidence" value="ECO:0007669"/>
    <property type="project" value="UniProtKB-UniRule"/>
</dbReference>
<dbReference type="GO" id="GO:0005975">
    <property type="term" value="P:carbohydrate metabolic process"/>
    <property type="evidence" value="ECO:0007669"/>
    <property type="project" value="InterPro"/>
</dbReference>
<dbReference type="GO" id="GO:0051301">
    <property type="term" value="P:cell division"/>
    <property type="evidence" value="ECO:0007669"/>
    <property type="project" value="UniProtKB-KW"/>
</dbReference>
<dbReference type="GO" id="GO:0071555">
    <property type="term" value="P:cell wall organization"/>
    <property type="evidence" value="ECO:0007669"/>
    <property type="project" value="UniProtKB-KW"/>
</dbReference>
<dbReference type="GO" id="GO:0030259">
    <property type="term" value="P:lipid glycosylation"/>
    <property type="evidence" value="ECO:0007669"/>
    <property type="project" value="UniProtKB-UniRule"/>
</dbReference>
<dbReference type="GO" id="GO:0009252">
    <property type="term" value="P:peptidoglycan biosynthetic process"/>
    <property type="evidence" value="ECO:0007669"/>
    <property type="project" value="UniProtKB-UniRule"/>
</dbReference>
<dbReference type="GO" id="GO:0008360">
    <property type="term" value="P:regulation of cell shape"/>
    <property type="evidence" value="ECO:0007669"/>
    <property type="project" value="UniProtKB-KW"/>
</dbReference>
<dbReference type="CDD" id="cd03785">
    <property type="entry name" value="GT28_MurG"/>
    <property type="match status" value="1"/>
</dbReference>
<dbReference type="Gene3D" id="3.40.50.2000">
    <property type="entry name" value="Glycogen Phosphorylase B"/>
    <property type="match status" value="2"/>
</dbReference>
<dbReference type="HAMAP" id="MF_00033">
    <property type="entry name" value="MurG"/>
    <property type="match status" value="1"/>
</dbReference>
<dbReference type="InterPro" id="IPR006009">
    <property type="entry name" value="GlcNAc_MurG"/>
</dbReference>
<dbReference type="InterPro" id="IPR007235">
    <property type="entry name" value="Glyco_trans_28_C"/>
</dbReference>
<dbReference type="InterPro" id="IPR004276">
    <property type="entry name" value="GlycoTrans_28_N"/>
</dbReference>
<dbReference type="PANTHER" id="PTHR21015:SF22">
    <property type="entry name" value="GLYCOSYLTRANSFERASE"/>
    <property type="match status" value="1"/>
</dbReference>
<dbReference type="PANTHER" id="PTHR21015">
    <property type="entry name" value="UDP-N-ACETYLGLUCOSAMINE--N-ACETYLMURAMYL-(PENTAPEPTIDE) PYROPHOSPHORYL-UNDECAPRENOL N-ACETYLGLUCOSAMINE TRANSFERASE 1"/>
    <property type="match status" value="1"/>
</dbReference>
<dbReference type="Pfam" id="PF04101">
    <property type="entry name" value="Glyco_tran_28_C"/>
    <property type="match status" value="1"/>
</dbReference>
<dbReference type="Pfam" id="PF03033">
    <property type="entry name" value="Glyco_transf_28"/>
    <property type="match status" value="1"/>
</dbReference>
<dbReference type="SUPFAM" id="SSF53756">
    <property type="entry name" value="UDP-Glycosyltransferase/glycogen phosphorylase"/>
    <property type="match status" value="1"/>
</dbReference>
<name>MURG_WOLTR</name>
<sequence>MDIVLATGGTGGHIFPAITLARAIKRQGYDSILFADKKTGKNTDVKDYTLPLNKPGGNKFRFFLLLIYSCVLALYQIRKLKPKLVIGFGGYASFPTLLAAKVLSIPIILHEQNAVLGRVNKFFFNSAELIATSFPETKYAKGNKCVFIGNFVDIKAKSHSSTKKILTVLIIAGSQGANFFDDVVSSVICNLPIEIRKKIRVVQQCMKKNMNKVEGLYKGGQVICELSEFFDDMGSRLTDAHLVISRAGATSIAEITLARRPAIYIPYPCSKDDHQFYNAEYIKDSGAAVVVEQNSEVKKNLTKLLVNLLGDSQKLRDMANNTKKIRIKNGVTEFIRIVIHKLG</sequence>
<accession>Q5GS79</accession>
<reference key="1">
    <citation type="journal article" date="2005" name="PLoS Biol.">
        <title>The Wolbachia genome of Brugia malayi: endosymbiont evolution within a human pathogenic nematode.</title>
        <authorList>
            <person name="Foster J."/>
            <person name="Ganatra M."/>
            <person name="Kamal I."/>
            <person name="Ware J."/>
            <person name="Makarova K."/>
            <person name="Ivanova N."/>
            <person name="Bhattacharyya A."/>
            <person name="Kapatral V."/>
            <person name="Kumar S."/>
            <person name="Posfai J."/>
            <person name="Vincze T."/>
            <person name="Ingram J."/>
            <person name="Moran L."/>
            <person name="Lapidus A."/>
            <person name="Omelchenko M."/>
            <person name="Kyrpides N."/>
            <person name="Ghedin E."/>
            <person name="Wang S."/>
            <person name="Goltsman E."/>
            <person name="Joukov V."/>
            <person name="Ostrovskaya O."/>
            <person name="Tsukerman K."/>
            <person name="Mazur M."/>
            <person name="Comb D."/>
            <person name="Koonin E."/>
            <person name="Slatko B."/>
        </authorList>
    </citation>
    <scope>NUCLEOTIDE SEQUENCE [LARGE SCALE GENOMIC DNA]</scope>
    <source>
        <strain>TRS</strain>
    </source>
</reference>
<feature type="chain" id="PRO_0000315201" description="UDP-N-acetylglucosamine--N-acetylmuramyl-(pentapeptide) pyrophosphoryl-undecaprenol N-acetylglucosamine transferase">
    <location>
        <begin position="1"/>
        <end position="343"/>
    </location>
</feature>
<feature type="binding site" evidence="1">
    <location>
        <begin position="10"/>
        <end position="12"/>
    </location>
    <ligand>
        <name>UDP-N-acetyl-alpha-D-glucosamine</name>
        <dbReference type="ChEBI" id="CHEBI:57705"/>
    </ligand>
</feature>
<feature type="binding site" evidence="1">
    <location>
        <position position="113"/>
    </location>
    <ligand>
        <name>UDP-N-acetyl-alpha-D-glucosamine</name>
        <dbReference type="ChEBI" id="CHEBI:57705"/>
    </ligand>
</feature>
<feature type="binding site" evidence="1">
    <location>
        <position position="174"/>
    </location>
    <ligand>
        <name>UDP-N-acetyl-alpha-D-glucosamine</name>
        <dbReference type="ChEBI" id="CHEBI:57705"/>
    </ligand>
</feature>
<feature type="binding site" evidence="1">
    <location>
        <position position="275"/>
    </location>
    <ligand>
        <name>UDP-N-acetyl-alpha-D-glucosamine</name>
        <dbReference type="ChEBI" id="CHEBI:57705"/>
    </ligand>
</feature>
<organism>
    <name type="scientific">Wolbachia sp. subsp. Brugia malayi (strain TRS)</name>
    <dbReference type="NCBI Taxonomy" id="292805"/>
    <lineage>
        <taxon>Bacteria</taxon>
        <taxon>Pseudomonadati</taxon>
        <taxon>Pseudomonadota</taxon>
        <taxon>Alphaproteobacteria</taxon>
        <taxon>Rickettsiales</taxon>
        <taxon>Anaplasmataceae</taxon>
        <taxon>Wolbachieae</taxon>
        <taxon>Wolbachia</taxon>
    </lineage>
</organism>
<comment type="function">
    <text evidence="1">Cell wall formation. Catalyzes the transfer of a GlcNAc subunit on undecaprenyl-pyrophosphoryl-MurNAc-pentapeptide (lipid intermediate I) to form undecaprenyl-pyrophosphoryl-MurNAc-(pentapeptide)GlcNAc (lipid intermediate II).</text>
</comment>
<comment type="catalytic activity">
    <reaction evidence="1">
        <text>di-trans,octa-cis-undecaprenyl diphospho-N-acetyl-alpha-D-muramoyl-L-alanyl-D-glutamyl-meso-2,6-diaminopimeloyl-D-alanyl-D-alanine + UDP-N-acetyl-alpha-D-glucosamine = di-trans,octa-cis-undecaprenyl diphospho-[N-acetyl-alpha-D-glucosaminyl-(1-&gt;4)]-N-acetyl-alpha-D-muramoyl-L-alanyl-D-glutamyl-meso-2,6-diaminopimeloyl-D-alanyl-D-alanine + UDP + H(+)</text>
        <dbReference type="Rhea" id="RHEA:31227"/>
        <dbReference type="ChEBI" id="CHEBI:15378"/>
        <dbReference type="ChEBI" id="CHEBI:57705"/>
        <dbReference type="ChEBI" id="CHEBI:58223"/>
        <dbReference type="ChEBI" id="CHEBI:61387"/>
        <dbReference type="ChEBI" id="CHEBI:61388"/>
        <dbReference type="EC" id="2.4.1.227"/>
    </reaction>
</comment>
<comment type="pathway">
    <text evidence="1">Cell wall biogenesis; peptidoglycan biosynthesis.</text>
</comment>
<comment type="subcellular location">
    <subcellularLocation>
        <location evidence="1">Cell membrane</location>
        <topology evidence="1">Peripheral membrane protein</topology>
        <orientation evidence="1">Cytoplasmic side</orientation>
    </subcellularLocation>
</comment>
<comment type="similarity">
    <text evidence="1">Belongs to the glycosyltransferase 28 family. MurG subfamily.</text>
</comment>
<keyword id="KW-0131">Cell cycle</keyword>
<keyword id="KW-0132">Cell division</keyword>
<keyword id="KW-1003">Cell membrane</keyword>
<keyword id="KW-0133">Cell shape</keyword>
<keyword id="KW-0961">Cell wall biogenesis/degradation</keyword>
<keyword id="KW-0328">Glycosyltransferase</keyword>
<keyword id="KW-0472">Membrane</keyword>
<keyword id="KW-0573">Peptidoglycan synthesis</keyword>
<keyword id="KW-1185">Reference proteome</keyword>
<keyword id="KW-0808">Transferase</keyword>
<proteinExistence type="inferred from homology"/>
<evidence type="ECO:0000255" key="1">
    <source>
        <dbReference type="HAMAP-Rule" id="MF_00033"/>
    </source>
</evidence>
<protein>
    <recommendedName>
        <fullName evidence="1">UDP-N-acetylglucosamine--N-acetylmuramyl-(pentapeptide) pyrophosphoryl-undecaprenol N-acetylglucosamine transferase</fullName>
        <ecNumber evidence="1">2.4.1.227</ecNumber>
    </recommendedName>
    <alternativeName>
        <fullName evidence="1">Undecaprenyl-PP-MurNAc-pentapeptide-UDPGlcNAc GlcNAc transferase</fullName>
    </alternativeName>
</protein>
<gene>
    <name evidence="1" type="primary">murG</name>
    <name type="ordered locus">Wbm0557</name>
</gene>